<reference key="1">
    <citation type="journal article" date="1998" name="J. Biol. Chem.">
        <title>Cloning and characterization of a second human CTP:phosphocholine cytidylyltransferase.</title>
        <authorList>
            <person name="Lykidis A."/>
            <person name="Murti K.G."/>
            <person name="Jackowski S."/>
        </authorList>
    </citation>
    <scope>NUCLEOTIDE SEQUENCE [MRNA] (ISOFORM 1)</scope>
    <scope>FUNCTION (ISOFORM 1)</scope>
    <scope>CATALYTIC ACTIVITY (ISOFORM 1)</scope>
    <scope>SUBCELLULAR LOCATION (ISOFORM 1)</scope>
    <scope>TISSUE SPECIFICITY(ISOFORM 1)</scope>
</reference>
<reference key="2">
    <citation type="journal article" date="1999" name="J. Biol. Chem.">
        <title>Distribution of CTP:phosphocholine cytidylyltransferase (CCT) isoforms. Identification of a new CCTbeta splice variant.</title>
        <authorList>
            <person name="Lykidis A."/>
            <person name="Baburina I."/>
            <person name="Jackowski S."/>
        </authorList>
    </citation>
    <scope>NUCLEOTIDE SEQUENCE [MRNA] (ISOFORM 2)</scope>
    <scope>FUNCTION (ISOFORMS 1 AND 2)</scope>
    <scope>CATALYTIC ACTIVITY (ISOFORMS 1 AND 2)</scope>
    <scope>SUBCELLULAR LOCATION (ISOFORMS 1 AND 2)</scope>
    <scope>PHOSPHORYLATION (ISOFORMS 1 AND 2)</scope>
</reference>
<reference key="3">
    <citation type="journal article" date="2004" name="Nat. Genet.">
        <title>Complete sequencing and characterization of 21,243 full-length human cDNAs.</title>
        <authorList>
            <person name="Ota T."/>
            <person name="Suzuki Y."/>
            <person name="Nishikawa T."/>
            <person name="Otsuki T."/>
            <person name="Sugiyama T."/>
            <person name="Irie R."/>
            <person name="Wakamatsu A."/>
            <person name="Hayashi K."/>
            <person name="Sato H."/>
            <person name="Nagai K."/>
            <person name="Kimura K."/>
            <person name="Makita H."/>
            <person name="Sekine M."/>
            <person name="Obayashi M."/>
            <person name="Nishi T."/>
            <person name="Shibahara T."/>
            <person name="Tanaka T."/>
            <person name="Ishii S."/>
            <person name="Yamamoto J."/>
            <person name="Saito K."/>
            <person name="Kawai Y."/>
            <person name="Isono Y."/>
            <person name="Nakamura Y."/>
            <person name="Nagahari K."/>
            <person name="Murakami K."/>
            <person name="Yasuda T."/>
            <person name="Iwayanagi T."/>
            <person name="Wagatsuma M."/>
            <person name="Shiratori A."/>
            <person name="Sudo H."/>
            <person name="Hosoiri T."/>
            <person name="Kaku Y."/>
            <person name="Kodaira H."/>
            <person name="Kondo H."/>
            <person name="Sugawara M."/>
            <person name="Takahashi M."/>
            <person name="Kanda K."/>
            <person name="Yokoi T."/>
            <person name="Furuya T."/>
            <person name="Kikkawa E."/>
            <person name="Omura Y."/>
            <person name="Abe K."/>
            <person name="Kamihara K."/>
            <person name="Katsuta N."/>
            <person name="Sato K."/>
            <person name="Tanikawa M."/>
            <person name="Yamazaki M."/>
            <person name="Ninomiya K."/>
            <person name="Ishibashi T."/>
            <person name="Yamashita H."/>
            <person name="Murakawa K."/>
            <person name="Fujimori K."/>
            <person name="Tanai H."/>
            <person name="Kimata M."/>
            <person name="Watanabe M."/>
            <person name="Hiraoka S."/>
            <person name="Chiba Y."/>
            <person name="Ishida S."/>
            <person name="Ono Y."/>
            <person name="Takiguchi S."/>
            <person name="Watanabe S."/>
            <person name="Yosida M."/>
            <person name="Hotuta T."/>
            <person name="Kusano J."/>
            <person name="Kanehori K."/>
            <person name="Takahashi-Fujii A."/>
            <person name="Hara H."/>
            <person name="Tanase T.-O."/>
            <person name="Nomura Y."/>
            <person name="Togiya S."/>
            <person name="Komai F."/>
            <person name="Hara R."/>
            <person name="Takeuchi K."/>
            <person name="Arita M."/>
            <person name="Imose N."/>
            <person name="Musashino K."/>
            <person name="Yuuki H."/>
            <person name="Oshima A."/>
            <person name="Sasaki N."/>
            <person name="Aotsuka S."/>
            <person name="Yoshikawa Y."/>
            <person name="Matsunawa H."/>
            <person name="Ichihara T."/>
            <person name="Shiohata N."/>
            <person name="Sano S."/>
            <person name="Moriya S."/>
            <person name="Momiyama H."/>
            <person name="Satoh N."/>
            <person name="Takami S."/>
            <person name="Terashima Y."/>
            <person name="Suzuki O."/>
            <person name="Nakagawa S."/>
            <person name="Senoh A."/>
            <person name="Mizoguchi H."/>
            <person name="Goto Y."/>
            <person name="Shimizu F."/>
            <person name="Wakebe H."/>
            <person name="Hishigaki H."/>
            <person name="Watanabe T."/>
            <person name="Sugiyama A."/>
            <person name="Takemoto M."/>
            <person name="Kawakami B."/>
            <person name="Yamazaki M."/>
            <person name="Watanabe K."/>
            <person name="Kumagai A."/>
            <person name="Itakura S."/>
            <person name="Fukuzumi Y."/>
            <person name="Fujimori Y."/>
            <person name="Komiyama M."/>
            <person name="Tashiro H."/>
            <person name="Tanigami A."/>
            <person name="Fujiwara T."/>
            <person name="Ono T."/>
            <person name="Yamada K."/>
            <person name="Fujii Y."/>
            <person name="Ozaki K."/>
            <person name="Hirao M."/>
            <person name="Ohmori Y."/>
            <person name="Kawabata A."/>
            <person name="Hikiji T."/>
            <person name="Kobatake N."/>
            <person name="Inagaki H."/>
            <person name="Ikema Y."/>
            <person name="Okamoto S."/>
            <person name="Okitani R."/>
            <person name="Kawakami T."/>
            <person name="Noguchi S."/>
            <person name="Itoh T."/>
            <person name="Shigeta K."/>
            <person name="Senba T."/>
            <person name="Matsumura K."/>
            <person name="Nakajima Y."/>
            <person name="Mizuno T."/>
            <person name="Morinaga M."/>
            <person name="Sasaki M."/>
            <person name="Togashi T."/>
            <person name="Oyama M."/>
            <person name="Hata H."/>
            <person name="Watanabe M."/>
            <person name="Komatsu T."/>
            <person name="Mizushima-Sugano J."/>
            <person name="Satoh T."/>
            <person name="Shirai Y."/>
            <person name="Takahashi Y."/>
            <person name="Nakagawa K."/>
            <person name="Okumura K."/>
            <person name="Nagase T."/>
            <person name="Nomura N."/>
            <person name="Kikuchi H."/>
            <person name="Masuho Y."/>
            <person name="Yamashita R."/>
            <person name="Nakai K."/>
            <person name="Yada T."/>
            <person name="Nakamura Y."/>
            <person name="Ohara O."/>
            <person name="Isogai T."/>
            <person name="Sugano S."/>
        </authorList>
    </citation>
    <scope>NUCLEOTIDE SEQUENCE [LARGE SCALE MRNA] (ISOFORMS 2 AND 4)</scope>
    <source>
        <tissue>Hippocampus</tissue>
        <tissue>Thalamus</tissue>
    </source>
</reference>
<reference key="4">
    <citation type="submission" date="2007-09" db="EMBL/GenBank/DDBJ databases">
        <authorList>
            <consortium name="SeattleSNPs variation discovery resource"/>
        </authorList>
    </citation>
    <scope>NUCLEOTIDE SEQUENCE [GENOMIC DNA]</scope>
</reference>
<reference key="5">
    <citation type="journal article" date="2005" name="Nature">
        <title>The DNA sequence of the human X chromosome.</title>
        <authorList>
            <person name="Ross M.T."/>
            <person name="Grafham D.V."/>
            <person name="Coffey A.J."/>
            <person name="Scherer S."/>
            <person name="McLay K."/>
            <person name="Muzny D."/>
            <person name="Platzer M."/>
            <person name="Howell G.R."/>
            <person name="Burrows C."/>
            <person name="Bird C.P."/>
            <person name="Frankish A."/>
            <person name="Lovell F.L."/>
            <person name="Howe K.L."/>
            <person name="Ashurst J.L."/>
            <person name="Fulton R.S."/>
            <person name="Sudbrak R."/>
            <person name="Wen G."/>
            <person name="Jones M.C."/>
            <person name="Hurles M.E."/>
            <person name="Andrews T.D."/>
            <person name="Scott C.E."/>
            <person name="Searle S."/>
            <person name="Ramser J."/>
            <person name="Whittaker A."/>
            <person name="Deadman R."/>
            <person name="Carter N.P."/>
            <person name="Hunt S.E."/>
            <person name="Chen R."/>
            <person name="Cree A."/>
            <person name="Gunaratne P."/>
            <person name="Havlak P."/>
            <person name="Hodgson A."/>
            <person name="Metzker M.L."/>
            <person name="Richards S."/>
            <person name="Scott G."/>
            <person name="Steffen D."/>
            <person name="Sodergren E."/>
            <person name="Wheeler D.A."/>
            <person name="Worley K.C."/>
            <person name="Ainscough R."/>
            <person name="Ambrose K.D."/>
            <person name="Ansari-Lari M.A."/>
            <person name="Aradhya S."/>
            <person name="Ashwell R.I."/>
            <person name="Babbage A.K."/>
            <person name="Bagguley C.L."/>
            <person name="Ballabio A."/>
            <person name="Banerjee R."/>
            <person name="Barker G.E."/>
            <person name="Barlow K.F."/>
            <person name="Barrett I.P."/>
            <person name="Bates K.N."/>
            <person name="Beare D.M."/>
            <person name="Beasley H."/>
            <person name="Beasley O."/>
            <person name="Beck A."/>
            <person name="Bethel G."/>
            <person name="Blechschmidt K."/>
            <person name="Brady N."/>
            <person name="Bray-Allen S."/>
            <person name="Bridgeman A.M."/>
            <person name="Brown A.J."/>
            <person name="Brown M.J."/>
            <person name="Bonnin D."/>
            <person name="Bruford E.A."/>
            <person name="Buhay C."/>
            <person name="Burch P."/>
            <person name="Burford D."/>
            <person name="Burgess J."/>
            <person name="Burrill W."/>
            <person name="Burton J."/>
            <person name="Bye J.M."/>
            <person name="Carder C."/>
            <person name="Carrel L."/>
            <person name="Chako J."/>
            <person name="Chapman J.C."/>
            <person name="Chavez D."/>
            <person name="Chen E."/>
            <person name="Chen G."/>
            <person name="Chen Y."/>
            <person name="Chen Z."/>
            <person name="Chinault C."/>
            <person name="Ciccodicola A."/>
            <person name="Clark S.Y."/>
            <person name="Clarke G."/>
            <person name="Clee C.M."/>
            <person name="Clegg S."/>
            <person name="Clerc-Blankenburg K."/>
            <person name="Clifford K."/>
            <person name="Cobley V."/>
            <person name="Cole C.G."/>
            <person name="Conquer J.S."/>
            <person name="Corby N."/>
            <person name="Connor R.E."/>
            <person name="David R."/>
            <person name="Davies J."/>
            <person name="Davis C."/>
            <person name="Davis J."/>
            <person name="Delgado O."/>
            <person name="Deshazo D."/>
            <person name="Dhami P."/>
            <person name="Ding Y."/>
            <person name="Dinh H."/>
            <person name="Dodsworth S."/>
            <person name="Draper H."/>
            <person name="Dugan-Rocha S."/>
            <person name="Dunham A."/>
            <person name="Dunn M."/>
            <person name="Durbin K.J."/>
            <person name="Dutta I."/>
            <person name="Eades T."/>
            <person name="Ellwood M."/>
            <person name="Emery-Cohen A."/>
            <person name="Errington H."/>
            <person name="Evans K.L."/>
            <person name="Faulkner L."/>
            <person name="Francis F."/>
            <person name="Frankland J."/>
            <person name="Fraser A.E."/>
            <person name="Galgoczy P."/>
            <person name="Gilbert J."/>
            <person name="Gill R."/>
            <person name="Gloeckner G."/>
            <person name="Gregory S.G."/>
            <person name="Gribble S."/>
            <person name="Griffiths C."/>
            <person name="Grocock R."/>
            <person name="Gu Y."/>
            <person name="Gwilliam R."/>
            <person name="Hamilton C."/>
            <person name="Hart E.A."/>
            <person name="Hawes A."/>
            <person name="Heath P.D."/>
            <person name="Heitmann K."/>
            <person name="Hennig S."/>
            <person name="Hernandez J."/>
            <person name="Hinzmann B."/>
            <person name="Ho S."/>
            <person name="Hoffs M."/>
            <person name="Howden P.J."/>
            <person name="Huckle E.J."/>
            <person name="Hume J."/>
            <person name="Hunt P.J."/>
            <person name="Hunt A.R."/>
            <person name="Isherwood J."/>
            <person name="Jacob L."/>
            <person name="Johnson D."/>
            <person name="Jones S."/>
            <person name="de Jong P.J."/>
            <person name="Joseph S.S."/>
            <person name="Keenan S."/>
            <person name="Kelly S."/>
            <person name="Kershaw J.K."/>
            <person name="Khan Z."/>
            <person name="Kioschis P."/>
            <person name="Klages S."/>
            <person name="Knights A.J."/>
            <person name="Kosiura A."/>
            <person name="Kovar-Smith C."/>
            <person name="Laird G.K."/>
            <person name="Langford C."/>
            <person name="Lawlor S."/>
            <person name="Leversha M."/>
            <person name="Lewis L."/>
            <person name="Liu W."/>
            <person name="Lloyd C."/>
            <person name="Lloyd D.M."/>
            <person name="Loulseged H."/>
            <person name="Loveland J.E."/>
            <person name="Lovell J.D."/>
            <person name="Lozado R."/>
            <person name="Lu J."/>
            <person name="Lyne R."/>
            <person name="Ma J."/>
            <person name="Maheshwari M."/>
            <person name="Matthews L.H."/>
            <person name="McDowall J."/>
            <person name="McLaren S."/>
            <person name="McMurray A."/>
            <person name="Meidl P."/>
            <person name="Meitinger T."/>
            <person name="Milne S."/>
            <person name="Miner G."/>
            <person name="Mistry S.L."/>
            <person name="Morgan M."/>
            <person name="Morris S."/>
            <person name="Mueller I."/>
            <person name="Mullikin J.C."/>
            <person name="Nguyen N."/>
            <person name="Nordsiek G."/>
            <person name="Nyakatura G."/>
            <person name="O'dell C.N."/>
            <person name="Okwuonu G."/>
            <person name="Palmer S."/>
            <person name="Pandian R."/>
            <person name="Parker D."/>
            <person name="Parrish J."/>
            <person name="Pasternak S."/>
            <person name="Patel D."/>
            <person name="Pearce A.V."/>
            <person name="Pearson D.M."/>
            <person name="Pelan S.E."/>
            <person name="Perez L."/>
            <person name="Porter K.M."/>
            <person name="Ramsey Y."/>
            <person name="Reichwald K."/>
            <person name="Rhodes S."/>
            <person name="Ridler K.A."/>
            <person name="Schlessinger D."/>
            <person name="Schueler M.G."/>
            <person name="Sehra H.K."/>
            <person name="Shaw-Smith C."/>
            <person name="Shen H."/>
            <person name="Sheridan E.M."/>
            <person name="Shownkeen R."/>
            <person name="Skuce C.D."/>
            <person name="Smith M.L."/>
            <person name="Sotheran E.C."/>
            <person name="Steingruber H.E."/>
            <person name="Steward C.A."/>
            <person name="Storey R."/>
            <person name="Swann R.M."/>
            <person name="Swarbreck D."/>
            <person name="Tabor P.E."/>
            <person name="Taudien S."/>
            <person name="Taylor T."/>
            <person name="Teague B."/>
            <person name="Thomas K."/>
            <person name="Thorpe A."/>
            <person name="Timms K."/>
            <person name="Tracey A."/>
            <person name="Trevanion S."/>
            <person name="Tromans A.C."/>
            <person name="d'Urso M."/>
            <person name="Verduzco D."/>
            <person name="Villasana D."/>
            <person name="Waldron L."/>
            <person name="Wall M."/>
            <person name="Wang Q."/>
            <person name="Warren J."/>
            <person name="Warry G.L."/>
            <person name="Wei X."/>
            <person name="West A."/>
            <person name="Whitehead S.L."/>
            <person name="Whiteley M.N."/>
            <person name="Wilkinson J.E."/>
            <person name="Willey D.L."/>
            <person name="Williams G."/>
            <person name="Williams L."/>
            <person name="Williamson A."/>
            <person name="Williamson H."/>
            <person name="Wilming L."/>
            <person name="Woodmansey R.L."/>
            <person name="Wray P.W."/>
            <person name="Yen J."/>
            <person name="Zhang J."/>
            <person name="Zhou J."/>
            <person name="Zoghbi H."/>
            <person name="Zorilla S."/>
            <person name="Buck D."/>
            <person name="Reinhardt R."/>
            <person name="Poustka A."/>
            <person name="Rosenthal A."/>
            <person name="Lehrach H."/>
            <person name="Meindl A."/>
            <person name="Minx P.J."/>
            <person name="Hillier L.W."/>
            <person name="Willard H.F."/>
            <person name="Wilson R.K."/>
            <person name="Waterston R.H."/>
            <person name="Rice C.M."/>
            <person name="Vaudin M."/>
            <person name="Coulson A."/>
            <person name="Nelson D.L."/>
            <person name="Weinstock G."/>
            <person name="Sulston J.E."/>
            <person name="Durbin R.M."/>
            <person name="Hubbard T."/>
            <person name="Gibbs R.A."/>
            <person name="Beck S."/>
            <person name="Rogers J."/>
            <person name="Bentley D.R."/>
        </authorList>
    </citation>
    <scope>NUCLEOTIDE SEQUENCE [LARGE SCALE GENOMIC DNA]</scope>
</reference>
<reference key="6">
    <citation type="submission" date="2005-07" db="EMBL/GenBank/DDBJ databases">
        <authorList>
            <person name="Mural R.J."/>
            <person name="Istrail S."/>
            <person name="Sutton G.G."/>
            <person name="Florea L."/>
            <person name="Halpern A.L."/>
            <person name="Mobarry C.M."/>
            <person name="Lippert R."/>
            <person name="Walenz B."/>
            <person name="Shatkay H."/>
            <person name="Dew I."/>
            <person name="Miller J.R."/>
            <person name="Flanigan M.J."/>
            <person name="Edwards N.J."/>
            <person name="Bolanos R."/>
            <person name="Fasulo D."/>
            <person name="Halldorsson B.V."/>
            <person name="Hannenhalli S."/>
            <person name="Turner R."/>
            <person name="Yooseph S."/>
            <person name="Lu F."/>
            <person name="Nusskern D.R."/>
            <person name="Shue B.C."/>
            <person name="Zheng X.H."/>
            <person name="Zhong F."/>
            <person name="Delcher A.L."/>
            <person name="Huson D.H."/>
            <person name="Kravitz S.A."/>
            <person name="Mouchard L."/>
            <person name="Reinert K."/>
            <person name="Remington K.A."/>
            <person name="Clark A.G."/>
            <person name="Waterman M.S."/>
            <person name="Eichler E.E."/>
            <person name="Adams M.D."/>
            <person name="Hunkapiller M.W."/>
            <person name="Myers E.W."/>
            <person name="Venter J.C."/>
        </authorList>
    </citation>
    <scope>NUCLEOTIDE SEQUENCE [LARGE SCALE GENOMIC DNA]</scope>
</reference>
<reference key="7">
    <citation type="journal article" date="2004" name="Genome Res.">
        <title>The status, quality, and expansion of the NIH full-length cDNA project: the Mammalian Gene Collection (MGC).</title>
        <authorList>
            <consortium name="The MGC Project Team"/>
        </authorList>
    </citation>
    <scope>NUCLEOTIDE SEQUENCE [LARGE SCALE MRNA] (ISOFORM 3)</scope>
    <source>
        <tissue>Brain</tissue>
    </source>
</reference>
<reference key="8">
    <citation type="journal article" date="2011" name="Sci. Signal.">
        <title>System-wide temporal characterization of the proteome and phosphoproteome of human embryonic stem cell differentiation.</title>
        <authorList>
            <person name="Rigbolt K.T."/>
            <person name="Prokhorova T.A."/>
            <person name="Akimov V."/>
            <person name="Henningsen J."/>
            <person name="Johansen P.T."/>
            <person name="Kratchmarova I."/>
            <person name="Kassem M."/>
            <person name="Mann M."/>
            <person name="Olsen J.V."/>
            <person name="Blagoev B."/>
        </authorList>
    </citation>
    <scope>PHOSPHORYLATION [LARGE SCALE ANALYSIS] AT SER-315; SER-319 AND SER-362</scope>
    <scope>IDENTIFICATION BY MASS SPECTROMETRY [LARGE SCALE ANALYSIS]</scope>
</reference>
<accession>Q9Y5K3</accession>
<accession>A8IX00</accession>
<accession>B2RCX8</accession>
<accession>B4DK10</accession>
<accession>E9PD84</accession>
<accession>O60621</accession>
<accession>Q86XC9</accession>
<feature type="chain" id="PRO_0000208456" description="Choline-phosphate cytidylyltransferase B">
    <location>
        <begin position="1"/>
        <end position="369"/>
    </location>
</feature>
<feature type="region of interest" description="Disordered" evidence="4">
    <location>
        <begin position="1"/>
        <end position="27"/>
    </location>
</feature>
<feature type="region of interest" description="Disordered" evidence="4">
    <location>
        <begin position="309"/>
        <end position="369"/>
    </location>
</feature>
<feature type="compositionally biased region" description="Low complexity" evidence="4">
    <location>
        <begin position="319"/>
        <end position="339"/>
    </location>
</feature>
<feature type="compositionally biased region" description="Low complexity" evidence="4">
    <location>
        <begin position="351"/>
        <end position="362"/>
    </location>
</feature>
<feature type="binding site" evidence="1">
    <location>
        <position position="84"/>
    </location>
    <ligand>
        <name>CTP</name>
        <dbReference type="ChEBI" id="CHEBI:37563"/>
    </ligand>
</feature>
<feature type="binding site" evidence="1">
    <location>
        <position position="85"/>
    </location>
    <ligand>
        <name>CTP</name>
        <dbReference type="ChEBI" id="CHEBI:37563"/>
    </ligand>
</feature>
<feature type="binding site" evidence="1">
    <location>
        <position position="92"/>
    </location>
    <ligand>
        <name>CTP</name>
        <dbReference type="ChEBI" id="CHEBI:37563"/>
    </ligand>
</feature>
<feature type="binding site" evidence="1">
    <location>
        <position position="122"/>
    </location>
    <ligand>
        <name>CTP</name>
        <dbReference type="ChEBI" id="CHEBI:37563"/>
    </ligand>
</feature>
<feature type="binding site" evidence="1">
    <location>
        <position position="122"/>
    </location>
    <ligand>
        <name>phosphocholine</name>
        <dbReference type="ChEBI" id="CHEBI:295975"/>
    </ligand>
</feature>
<feature type="binding site" evidence="1">
    <location>
        <position position="151"/>
    </location>
    <ligand>
        <name>phosphocholine</name>
        <dbReference type="ChEBI" id="CHEBI:295975"/>
    </ligand>
</feature>
<feature type="binding site" evidence="1">
    <location>
        <position position="168"/>
    </location>
    <ligand>
        <name>CTP</name>
        <dbReference type="ChEBI" id="CHEBI:37563"/>
    </ligand>
</feature>
<feature type="binding site" evidence="1">
    <location>
        <position position="169"/>
    </location>
    <ligand>
        <name>CTP</name>
        <dbReference type="ChEBI" id="CHEBI:37563"/>
    </ligand>
</feature>
<feature type="binding site" evidence="1">
    <location>
        <position position="173"/>
    </location>
    <ligand>
        <name>CTP</name>
        <dbReference type="ChEBI" id="CHEBI:37563"/>
    </ligand>
</feature>
<feature type="binding site" evidence="1">
    <location>
        <position position="195"/>
    </location>
    <ligand>
        <name>CTP</name>
        <dbReference type="ChEBI" id="CHEBI:37563"/>
    </ligand>
</feature>
<feature type="binding site" evidence="1">
    <location>
        <position position="196"/>
    </location>
    <ligand>
        <name>CTP</name>
        <dbReference type="ChEBI" id="CHEBI:37563"/>
    </ligand>
</feature>
<feature type="binding site" evidence="1">
    <location>
        <position position="197"/>
    </location>
    <ligand>
        <name>CTP</name>
        <dbReference type="ChEBI" id="CHEBI:37563"/>
    </ligand>
</feature>
<feature type="binding site" evidence="1">
    <location>
        <position position="200"/>
    </location>
    <ligand>
        <name>CTP</name>
        <dbReference type="ChEBI" id="CHEBI:37563"/>
    </ligand>
</feature>
<feature type="modified residue" description="Phosphoserine" evidence="13">
    <location>
        <position position="315"/>
    </location>
</feature>
<feature type="modified residue" description="Phosphoserine" evidence="13">
    <location>
        <position position="319"/>
    </location>
</feature>
<feature type="modified residue" description="Phosphoserine" evidence="1">
    <location>
        <position position="322"/>
    </location>
</feature>
<feature type="modified residue" description="Phosphoserine" evidence="2">
    <location>
        <position position="323"/>
    </location>
</feature>
<feature type="modified residue" description="Phosphoserine" evidence="1">
    <location>
        <position position="329"/>
    </location>
</feature>
<feature type="modified residue" description="Phosphoserine" evidence="1">
    <location>
        <position position="331"/>
    </location>
</feature>
<feature type="modified residue" description="Phosphoserine" evidence="3">
    <location>
        <position position="335"/>
    </location>
</feature>
<feature type="modified residue" description="Phosphothreonine" evidence="1">
    <location>
        <position position="345"/>
    </location>
</feature>
<feature type="modified residue" description="Phosphoserine" evidence="1">
    <location>
        <position position="346"/>
    </location>
</feature>
<feature type="modified residue" description="Phosphoserine" evidence="1">
    <location>
        <position position="349"/>
    </location>
</feature>
<feature type="modified residue" description="Phosphoserine" evidence="1">
    <location>
        <position position="350"/>
    </location>
</feature>
<feature type="modified residue" description="Phosphoserine" evidence="1">
    <location>
        <position position="355"/>
    </location>
</feature>
<feature type="modified residue" description="Phosphoserine" evidence="2">
    <location>
        <position position="360"/>
    </location>
</feature>
<feature type="modified residue" description="Phosphoserine" evidence="13">
    <location>
        <position position="362"/>
    </location>
</feature>
<feature type="splice variant" id="VSP_044659" description="In isoform 4." evidence="8">
    <original>MPVVTTDAESETGIPKSLSNEPPSETMEEIEHTCPQPRL</original>
    <variation>MVGHQECIMEEDNRAPQLWRK</variation>
    <location>
        <begin position="1"/>
        <end position="39"/>
    </location>
</feature>
<feature type="splice variant" id="VSP_020045" description="In isoform 3." evidence="9">
    <location>
        <begin position="1"/>
        <end position="16"/>
    </location>
</feature>
<feature type="splice variant" id="VSP_020046" description="In isoform 3." evidence="9">
    <original>SLSNEPPSETMEEIEHTCPQPRL</original>
    <variation>MVGNQECIMEEDNRAPQLWRK</variation>
    <location>
        <begin position="17"/>
        <end position="39"/>
    </location>
</feature>
<feature type="splice variant" id="VSP_001226" description="In isoform 1." evidence="10">
    <original>VSSPTRSRSPSRSPSPTFSWLPLKTSPPSSPKAASASISSMSEGDEDEK</original>
    <variation>LKSWARCRDF</variation>
    <location>
        <begin position="321"/>
        <end position="369"/>
    </location>
</feature>
<feature type="sequence conflict" description="In Ref. 3; BAG59022." evidence="11" ref="3">
    <original>T</original>
    <variation>S</variation>
    <location>
        <position position="154"/>
    </location>
</feature>
<keyword id="KW-0025">Alternative splicing</keyword>
<keyword id="KW-0963">Cytoplasm</keyword>
<keyword id="KW-0256">Endoplasmic reticulum</keyword>
<keyword id="KW-0444">Lipid biosynthesis</keyword>
<keyword id="KW-0443">Lipid metabolism</keyword>
<keyword id="KW-0548">Nucleotidyltransferase</keyword>
<keyword id="KW-0594">Phospholipid biosynthesis</keyword>
<keyword id="KW-1208">Phospholipid metabolism</keyword>
<keyword id="KW-0597">Phosphoprotein</keyword>
<keyword id="KW-1267">Proteomics identification</keyword>
<keyword id="KW-1185">Reference proteome</keyword>
<keyword id="KW-0808">Transferase</keyword>
<evidence type="ECO:0000250" key="1">
    <source>
        <dbReference type="UniProtKB" id="P19836"/>
    </source>
</evidence>
<evidence type="ECO:0000250" key="2">
    <source>
        <dbReference type="UniProtKB" id="Q811Q9"/>
    </source>
</evidence>
<evidence type="ECO:0000250" key="3">
    <source>
        <dbReference type="UniProtKB" id="Q9QZC4"/>
    </source>
</evidence>
<evidence type="ECO:0000256" key="4">
    <source>
        <dbReference type="SAM" id="MobiDB-lite"/>
    </source>
</evidence>
<evidence type="ECO:0000269" key="5">
    <source>
    </source>
</evidence>
<evidence type="ECO:0000269" key="6">
    <source>
    </source>
</evidence>
<evidence type="ECO:0000303" key="7">
    <source>
    </source>
</evidence>
<evidence type="ECO:0000303" key="8">
    <source>
    </source>
</evidence>
<evidence type="ECO:0000303" key="9">
    <source>
    </source>
</evidence>
<evidence type="ECO:0000303" key="10">
    <source>
    </source>
</evidence>
<evidence type="ECO:0000305" key="11"/>
<evidence type="ECO:0000305" key="12">
    <source>
    </source>
</evidence>
<evidence type="ECO:0007744" key="13">
    <source>
    </source>
</evidence>
<gene>
    <name type="primary">PCYT1B</name>
    <name type="synonym">CCTB</name>
</gene>
<sequence length="369" mass="41940">MPVVTTDAESETGIPKSLSNEPPSETMEEIEHTCPQPRLTLTAPAPFADETNCQCQAPHEKLTIAQARLGTPADRPVRVYADGIFDLFHSGHARALMQAKTLFPNSYLLVGVCSDDLTHKFKGFTVMNEAERYEALRHCRYVDEVIRDAPWTLTPEFLEKHKIDFVAHDDIPYSSAGSDDVYKHIKEAGMFVPTQRTEGISTSDIITRIVRDYDVYARRNLQRGYTAKELNVSFINEKRYRFQNQVDKMKEKVKNVEERSKEFVNRVEEKSHDLIQKWEEKSREFIGNFLELFGPDGAWKQMFQERSSRMLQALSPKQSPVSSPTRSRSPSRSPSPTFSWLPLKTSPPSSPKAASASISSMSEGDEDEK</sequence>
<protein>
    <recommendedName>
        <fullName>Choline-phosphate cytidylyltransferase B</fullName>
        <ecNumber evidence="5 6">2.7.7.15</ecNumber>
    </recommendedName>
    <alternativeName>
        <fullName>CCT-beta</fullName>
    </alternativeName>
    <alternativeName>
        <fullName>CTP:phosphocholine cytidylyltransferase B</fullName>
        <shortName>CCT B</shortName>
        <shortName>CT B</shortName>
    </alternativeName>
    <alternativeName>
        <fullName>Phosphorylcholine transferase B</fullName>
    </alternativeName>
</protein>
<proteinExistence type="evidence at protein level"/>
<comment type="function">
    <molecule>Isoform 1</molecule>
    <text evidence="5 6">Catalyzes the key rate-limiting step in the CDP-choline pathway for phosphatidylcholine biosynthesis.</text>
</comment>
<comment type="function">
    <molecule>Isoform 2</molecule>
    <text evidence="5">Catalyzes the key rate-limiting step in the CDP-choline pathway for phosphatidylcholine biosynthesis.</text>
</comment>
<comment type="catalytic activity">
    <reaction evidence="5 6">
        <text>phosphocholine + CTP + H(+) = CDP-choline + diphosphate</text>
        <dbReference type="Rhea" id="RHEA:18997"/>
        <dbReference type="ChEBI" id="CHEBI:15378"/>
        <dbReference type="ChEBI" id="CHEBI:33019"/>
        <dbReference type="ChEBI" id="CHEBI:37563"/>
        <dbReference type="ChEBI" id="CHEBI:58779"/>
        <dbReference type="ChEBI" id="CHEBI:295975"/>
        <dbReference type="EC" id="2.7.7.15"/>
    </reaction>
    <physiologicalReaction direction="left-to-right" evidence="12">
        <dbReference type="Rhea" id="RHEA:18998"/>
    </physiologicalReaction>
</comment>
<comment type="pathway">
    <text evidence="5 6">Phospholipid metabolism; phosphatidylcholine biosynthesis; phosphatidylcholine from phosphocholine: step 1/2.</text>
</comment>
<comment type="subunit">
    <text evidence="1">Homodimer.</text>
</comment>
<comment type="interaction">
    <interactant intactId="EBI-12280028">
        <id>Q9Y5K3-3</id>
    </interactant>
    <interactant intactId="EBI-2563309">
        <id>P49585</id>
        <label>PCYT1A</label>
    </interactant>
    <organismsDiffer>false</organismsDiffer>
    <experiments>6</experiments>
</comment>
<comment type="interaction">
    <interactant intactId="EBI-12280028">
        <id>Q9Y5K3-3</id>
    </interactant>
    <interactant intactId="EBI-12280028">
        <id>Q9Y5K3-3</id>
        <label>PCYT1B</label>
    </interactant>
    <organismsDiffer>false</organismsDiffer>
    <experiments>3</experiments>
</comment>
<comment type="interaction">
    <interactant intactId="EBI-12280028">
        <id>Q9Y5K3-3</id>
    </interactant>
    <interactant intactId="EBI-721293">
        <id>Q9BTV4</id>
        <label>TMEM43</label>
    </interactant>
    <organismsDiffer>false</organismsDiffer>
    <experiments>3</experiments>
</comment>
<comment type="interaction">
    <interactant intactId="EBI-12280028">
        <id>Q9Y5K3-3</id>
    </interactant>
    <interactant intactId="EBI-11337915">
        <id>Q8N0U8</id>
        <label>VKORC1L1</label>
    </interactant>
    <organismsDiffer>false</organismsDiffer>
    <experiments>8</experiments>
</comment>
<comment type="subcellular location">
    <molecule>Isoform 1</molecule>
    <subcellularLocation>
        <location evidence="6">Cytoplasm</location>
    </subcellularLocation>
    <subcellularLocation>
        <location evidence="5">Endoplasmic reticulum</location>
    </subcellularLocation>
</comment>
<comment type="subcellular location">
    <molecule>Isoform 2</molecule>
    <subcellularLocation>
        <location evidence="5">Endoplasmic reticulum</location>
    </subcellularLocation>
</comment>
<comment type="alternative products">
    <event type="alternative splicing"/>
    <isoform>
        <id>Q9Y5K3-1</id>
        <name>2</name>
        <name evidence="7">Beta-2</name>
        <sequence type="displayed"/>
    </isoform>
    <isoform>
        <id>Q9Y5K3-2</id>
        <name>1</name>
        <name evidence="7">Beta-1</name>
        <sequence type="described" ref="VSP_001226"/>
    </isoform>
    <isoform>
        <id>Q9Y5K3-3</id>
        <name>3</name>
        <sequence type="described" ref="VSP_020045 VSP_020046"/>
    </isoform>
    <isoform>
        <id>Q9Y5K3-4</id>
        <name>4</name>
        <sequence type="described" ref="VSP_044659"/>
    </isoform>
</comment>
<comment type="tissue specificity">
    <molecule>Isoform 1</molecule>
    <text evidence="5 6">Highly expressed in testis, placenta, brain, ovary, liver and fetal lung.</text>
</comment>
<comment type="tissue specificity">
    <molecule>Isoform 2</molecule>
    <text evidence="5">Expressed in brain, liver and fetal lung.</text>
</comment>
<comment type="PTM">
    <molecule>Isoform 1</molecule>
    <text evidence="5">Phosphorylated.</text>
</comment>
<comment type="PTM">
    <molecule>Isoform 2</molecule>
    <text evidence="5">Extensively phosphorylated.</text>
</comment>
<comment type="similarity">
    <text evidence="11">Belongs to the cytidylyltransferase family.</text>
</comment>
<organism>
    <name type="scientific">Homo sapiens</name>
    <name type="common">Human</name>
    <dbReference type="NCBI Taxonomy" id="9606"/>
    <lineage>
        <taxon>Eukaryota</taxon>
        <taxon>Metazoa</taxon>
        <taxon>Chordata</taxon>
        <taxon>Craniata</taxon>
        <taxon>Vertebrata</taxon>
        <taxon>Euteleostomi</taxon>
        <taxon>Mammalia</taxon>
        <taxon>Eutheria</taxon>
        <taxon>Euarchontoglires</taxon>
        <taxon>Primates</taxon>
        <taxon>Haplorrhini</taxon>
        <taxon>Catarrhini</taxon>
        <taxon>Hominidae</taxon>
        <taxon>Homo</taxon>
    </lineage>
</organism>
<name>PCY1B_HUMAN</name>
<dbReference type="EC" id="2.7.7.15" evidence="5 6"/>
<dbReference type="EMBL" id="AF052510">
    <property type="protein sequence ID" value="AAC39754.1"/>
    <property type="molecule type" value="mRNA"/>
</dbReference>
<dbReference type="EMBL" id="AF148464">
    <property type="protein sequence ID" value="AAD35088.1"/>
    <property type="molecule type" value="mRNA"/>
</dbReference>
<dbReference type="EMBL" id="AK296333">
    <property type="protein sequence ID" value="BAG59022.1"/>
    <property type="molecule type" value="mRNA"/>
</dbReference>
<dbReference type="EMBL" id="AK315323">
    <property type="protein sequence ID" value="BAG37725.1"/>
    <property type="molecule type" value="mRNA"/>
</dbReference>
<dbReference type="EMBL" id="EU181262">
    <property type="protein sequence ID" value="ABW03924.1"/>
    <property type="molecule type" value="Genomic_DNA"/>
</dbReference>
<dbReference type="EMBL" id="AC079168">
    <property type="status" value="NOT_ANNOTATED_CDS"/>
    <property type="molecule type" value="Genomic_DNA"/>
</dbReference>
<dbReference type="EMBL" id="CH471074">
    <property type="protein sequence ID" value="EAW99021.1"/>
    <property type="molecule type" value="Genomic_DNA"/>
</dbReference>
<dbReference type="EMBL" id="BC045634">
    <property type="protein sequence ID" value="AAH45634.2"/>
    <property type="molecule type" value="mRNA"/>
</dbReference>
<dbReference type="CCDS" id="CCDS14213.1">
    <molecule id="Q9Y5K3-1"/>
</dbReference>
<dbReference type="CCDS" id="CCDS55391.1">
    <molecule id="Q9Y5K3-2"/>
</dbReference>
<dbReference type="CCDS" id="CCDS55392.1">
    <molecule id="Q9Y5K3-4"/>
</dbReference>
<dbReference type="RefSeq" id="NP_001156736.1">
    <molecule id="Q9Y5K3-4"/>
    <property type="nucleotide sequence ID" value="NM_001163264.2"/>
</dbReference>
<dbReference type="RefSeq" id="NP_001156737.1">
    <molecule id="Q9Y5K3-2"/>
    <property type="nucleotide sequence ID" value="NM_001163265.2"/>
</dbReference>
<dbReference type="RefSeq" id="NP_004836.2">
    <molecule id="Q9Y5K3-1"/>
    <property type="nucleotide sequence ID" value="NM_004845.4"/>
</dbReference>
<dbReference type="SMR" id="Q9Y5K3"/>
<dbReference type="BioGRID" id="114854">
    <property type="interactions" value="13"/>
</dbReference>
<dbReference type="FunCoup" id="Q9Y5K3">
    <property type="interactions" value="947"/>
</dbReference>
<dbReference type="IntAct" id="Q9Y5K3">
    <property type="interactions" value="4"/>
</dbReference>
<dbReference type="STRING" id="9606.ENSP00000368439"/>
<dbReference type="DrugBank" id="DB04540">
    <property type="generic name" value="Cholesterol"/>
</dbReference>
<dbReference type="DrugBank" id="DB00122">
    <property type="generic name" value="Choline"/>
</dbReference>
<dbReference type="DrugBank" id="DB14006">
    <property type="generic name" value="Choline salicylate"/>
</dbReference>
<dbReference type="DrugBank" id="DB13098">
    <property type="generic name" value="CT-2584"/>
</dbReference>
<dbReference type="DrugBank" id="DB03203">
    <property type="generic name" value="Sphingosine"/>
</dbReference>
<dbReference type="SwissLipids" id="SLP:000001754"/>
<dbReference type="iPTMnet" id="Q9Y5K3"/>
<dbReference type="PhosphoSitePlus" id="Q9Y5K3"/>
<dbReference type="SwissPalm" id="Q9Y5K3"/>
<dbReference type="BioMuta" id="PCYT1B"/>
<dbReference type="DMDM" id="12643330"/>
<dbReference type="jPOST" id="Q9Y5K3"/>
<dbReference type="MassIVE" id="Q9Y5K3"/>
<dbReference type="PaxDb" id="9606-ENSP00000368439"/>
<dbReference type="PeptideAtlas" id="Q9Y5K3"/>
<dbReference type="ProteomicsDB" id="19606"/>
<dbReference type="ProteomicsDB" id="86427">
    <molecule id="Q9Y5K3-1"/>
</dbReference>
<dbReference type="ProteomicsDB" id="86428">
    <molecule id="Q9Y5K3-2"/>
</dbReference>
<dbReference type="ProteomicsDB" id="86429">
    <molecule id="Q9Y5K3-3"/>
</dbReference>
<dbReference type="Pumba" id="Q9Y5K3"/>
<dbReference type="Antibodypedia" id="505">
    <property type="antibodies" value="57 antibodies from 20 providers"/>
</dbReference>
<dbReference type="DNASU" id="9468"/>
<dbReference type="Ensembl" id="ENST00000356768.8">
    <molecule id="Q9Y5K3-2"/>
    <property type="protein sequence ID" value="ENSP00000349211.4"/>
    <property type="gene ID" value="ENSG00000102230.14"/>
</dbReference>
<dbReference type="Ensembl" id="ENST00000379144.7">
    <molecule id="Q9Y5K3-1"/>
    <property type="protein sequence ID" value="ENSP00000368439.2"/>
    <property type="gene ID" value="ENSG00000102230.14"/>
</dbReference>
<dbReference type="Ensembl" id="ENST00000379145.5">
    <molecule id="Q9Y5K3-4"/>
    <property type="protein sequence ID" value="ENSP00000368440.1"/>
    <property type="gene ID" value="ENSG00000102230.14"/>
</dbReference>
<dbReference type="GeneID" id="9468"/>
<dbReference type="KEGG" id="hsa:9468"/>
<dbReference type="MANE-Select" id="ENST00000379144.7">
    <property type="protein sequence ID" value="ENSP00000368439.2"/>
    <property type="RefSeq nucleotide sequence ID" value="NM_004845.5"/>
    <property type="RefSeq protein sequence ID" value="NP_004836.2"/>
</dbReference>
<dbReference type="UCSC" id="uc004dbi.4">
    <molecule id="Q9Y5K3-1"/>
    <property type="organism name" value="human"/>
</dbReference>
<dbReference type="AGR" id="HGNC:8755"/>
<dbReference type="CTD" id="9468"/>
<dbReference type="DisGeNET" id="9468"/>
<dbReference type="GeneCards" id="PCYT1B"/>
<dbReference type="HGNC" id="HGNC:8755">
    <property type="gene designation" value="PCYT1B"/>
</dbReference>
<dbReference type="HPA" id="ENSG00000102230">
    <property type="expression patterns" value="Tissue enhanced (brain, retina, testis)"/>
</dbReference>
<dbReference type="MIM" id="300948">
    <property type="type" value="gene"/>
</dbReference>
<dbReference type="neXtProt" id="NX_Q9Y5K3"/>
<dbReference type="OpenTargets" id="ENSG00000102230"/>
<dbReference type="PharmGKB" id="PA33100"/>
<dbReference type="VEuPathDB" id="HostDB:ENSG00000102230"/>
<dbReference type="eggNOG" id="KOG2804">
    <property type="taxonomic scope" value="Eukaryota"/>
</dbReference>
<dbReference type="GeneTree" id="ENSGT00940000156040"/>
<dbReference type="HOGENOM" id="CLU_034585_4_2_1"/>
<dbReference type="InParanoid" id="Q9Y5K3"/>
<dbReference type="OMA" id="FEDFSIC"/>
<dbReference type="OrthoDB" id="17102at2759"/>
<dbReference type="PAN-GO" id="Q9Y5K3">
    <property type="GO annotations" value="2 GO annotations based on evolutionary models"/>
</dbReference>
<dbReference type="PhylomeDB" id="Q9Y5K3"/>
<dbReference type="TreeFam" id="TF106336"/>
<dbReference type="PathwayCommons" id="Q9Y5K3"/>
<dbReference type="Reactome" id="R-HSA-1483191">
    <property type="pathway name" value="Synthesis of PC"/>
</dbReference>
<dbReference type="SignaLink" id="Q9Y5K3"/>
<dbReference type="UniPathway" id="UPA00753">
    <property type="reaction ID" value="UER00739"/>
</dbReference>
<dbReference type="BioGRID-ORCS" id="9468">
    <property type="hits" value="23 hits in 766 CRISPR screens"/>
</dbReference>
<dbReference type="ChiTaRS" id="PCYT1B">
    <property type="organism name" value="human"/>
</dbReference>
<dbReference type="GeneWiki" id="PCYT1B"/>
<dbReference type="GenomeRNAi" id="9468"/>
<dbReference type="Pharos" id="Q9Y5K3">
    <property type="development level" value="Tbio"/>
</dbReference>
<dbReference type="PRO" id="PR:Q9Y5K3"/>
<dbReference type="Proteomes" id="UP000005640">
    <property type="component" value="Chromosome X"/>
</dbReference>
<dbReference type="RNAct" id="Q9Y5K3">
    <property type="molecule type" value="protein"/>
</dbReference>
<dbReference type="Bgee" id="ENSG00000102230">
    <property type="expression patterns" value="Expressed in ventricular zone and 146 other cell types or tissues"/>
</dbReference>
<dbReference type="ExpressionAtlas" id="Q9Y5K3">
    <property type="expression patterns" value="baseline and differential"/>
</dbReference>
<dbReference type="GO" id="GO:0005737">
    <property type="term" value="C:cytoplasm"/>
    <property type="evidence" value="ECO:0000304"/>
    <property type="project" value="ProtInc"/>
</dbReference>
<dbReference type="GO" id="GO:0005783">
    <property type="term" value="C:endoplasmic reticulum"/>
    <property type="evidence" value="ECO:0000314"/>
    <property type="project" value="UniProtKB"/>
</dbReference>
<dbReference type="GO" id="GO:0005789">
    <property type="term" value="C:endoplasmic reticulum membrane"/>
    <property type="evidence" value="ECO:0000304"/>
    <property type="project" value="Reactome"/>
</dbReference>
<dbReference type="GO" id="GO:0004105">
    <property type="term" value="F:choline-phosphate cytidylyltransferase activity"/>
    <property type="evidence" value="ECO:0000314"/>
    <property type="project" value="UniProtKB"/>
</dbReference>
<dbReference type="GO" id="GO:0042802">
    <property type="term" value="F:identical protein binding"/>
    <property type="evidence" value="ECO:0000353"/>
    <property type="project" value="IntAct"/>
</dbReference>
<dbReference type="GO" id="GO:0031210">
    <property type="term" value="F:phosphatidylcholine binding"/>
    <property type="evidence" value="ECO:0000318"/>
    <property type="project" value="GO_Central"/>
</dbReference>
<dbReference type="GO" id="GO:0006657">
    <property type="term" value="P:CDP-choline pathway"/>
    <property type="evidence" value="ECO:0000314"/>
    <property type="project" value="UniProtKB"/>
</dbReference>
<dbReference type="GO" id="GO:0001541">
    <property type="term" value="P:ovarian follicle development"/>
    <property type="evidence" value="ECO:0007669"/>
    <property type="project" value="Ensembl"/>
</dbReference>
<dbReference type="GO" id="GO:0006656">
    <property type="term" value="P:phosphatidylcholine biosynthetic process"/>
    <property type="evidence" value="ECO:0000314"/>
    <property type="project" value="UniProtKB"/>
</dbReference>
<dbReference type="GO" id="GO:0007283">
    <property type="term" value="P:spermatogenesis"/>
    <property type="evidence" value="ECO:0007669"/>
    <property type="project" value="Ensembl"/>
</dbReference>
<dbReference type="CDD" id="cd02174">
    <property type="entry name" value="CCT"/>
    <property type="match status" value="1"/>
</dbReference>
<dbReference type="FunFam" id="3.40.50.620:FF:000016">
    <property type="entry name" value="Putative choline-phosphate cytidylyltransferase B"/>
    <property type="match status" value="1"/>
</dbReference>
<dbReference type="Gene3D" id="3.40.50.620">
    <property type="entry name" value="HUPs"/>
    <property type="match status" value="1"/>
</dbReference>
<dbReference type="InterPro" id="IPR041723">
    <property type="entry name" value="CCT"/>
</dbReference>
<dbReference type="InterPro" id="IPR004821">
    <property type="entry name" value="Cyt_trans-like"/>
</dbReference>
<dbReference type="InterPro" id="IPR045049">
    <property type="entry name" value="Pcy1-like"/>
</dbReference>
<dbReference type="InterPro" id="IPR014729">
    <property type="entry name" value="Rossmann-like_a/b/a_fold"/>
</dbReference>
<dbReference type="NCBIfam" id="TIGR00125">
    <property type="entry name" value="cyt_tran_rel"/>
    <property type="match status" value="1"/>
</dbReference>
<dbReference type="PANTHER" id="PTHR10739:SF20">
    <property type="entry name" value="CHOLINE-PHOSPHATE CYTIDYLYLTRANSFERASE B"/>
    <property type="match status" value="1"/>
</dbReference>
<dbReference type="PANTHER" id="PTHR10739">
    <property type="entry name" value="CYTIDYLYLTRANSFERASE"/>
    <property type="match status" value="1"/>
</dbReference>
<dbReference type="Pfam" id="PF01467">
    <property type="entry name" value="CTP_transf_like"/>
    <property type="match status" value="1"/>
</dbReference>
<dbReference type="SUPFAM" id="SSF52374">
    <property type="entry name" value="Nucleotidylyl transferase"/>
    <property type="match status" value="1"/>
</dbReference>